<reference key="1">
    <citation type="journal article" date="2002" name="Immunogenetics">
        <title>Beta-defensin 1 gene variability among non-human primates.</title>
        <authorList>
            <person name="Del Pero M."/>
            <person name="Boniotto M."/>
            <person name="Zuccon D."/>
            <person name="Cervella P."/>
            <person name="Spano A."/>
            <person name="Amoroso A."/>
            <person name="Crovella S."/>
        </authorList>
    </citation>
    <scope>NUCLEOTIDE SEQUENCE [GENOMIC DNA]</scope>
</reference>
<accession>Q95J18</accession>
<gene>
    <name type="primary">DEFB1</name>
</gene>
<dbReference type="EMBL" id="AY033757">
    <property type="protein sequence ID" value="AAK61469.1"/>
    <property type="molecule type" value="Genomic_DNA"/>
</dbReference>
<dbReference type="EMBL" id="AY033742">
    <property type="protein sequence ID" value="AAK61469.1"/>
    <property type="status" value="JOINED"/>
    <property type="molecule type" value="Genomic_DNA"/>
</dbReference>
<dbReference type="SMR" id="Q95J18"/>
<dbReference type="GO" id="GO:0005615">
    <property type="term" value="C:extracellular space"/>
    <property type="evidence" value="ECO:0007669"/>
    <property type="project" value="TreeGrafter"/>
</dbReference>
<dbReference type="GO" id="GO:0016020">
    <property type="term" value="C:membrane"/>
    <property type="evidence" value="ECO:0000250"/>
    <property type="project" value="UniProtKB"/>
</dbReference>
<dbReference type="GO" id="GO:1990742">
    <property type="term" value="C:microvesicle"/>
    <property type="evidence" value="ECO:0000250"/>
    <property type="project" value="UniProtKB"/>
</dbReference>
<dbReference type="GO" id="GO:0097225">
    <property type="term" value="C:sperm midpiece"/>
    <property type="evidence" value="ECO:0000250"/>
    <property type="project" value="UniProtKB"/>
</dbReference>
<dbReference type="GO" id="GO:0031731">
    <property type="term" value="F:CCR6 chemokine receptor binding"/>
    <property type="evidence" value="ECO:0000250"/>
    <property type="project" value="UniProtKB"/>
</dbReference>
<dbReference type="GO" id="GO:0042802">
    <property type="term" value="F:identical protein binding"/>
    <property type="evidence" value="ECO:0000250"/>
    <property type="project" value="UniProtKB"/>
</dbReference>
<dbReference type="GO" id="GO:0019722">
    <property type="term" value="P:calcium-mediated signaling"/>
    <property type="evidence" value="ECO:0000250"/>
    <property type="project" value="UniProtKB"/>
</dbReference>
<dbReference type="GO" id="GO:0050829">
    <property type="term" value="P:defense response to Gram-negative bacterium"/>
    <property type="evidence" value="ECO:0000250"/>
    <property type="project" value="UniProtKB"/>
</dbReference>
<dbReference type="GO" id="GO:0050830">
    <property type="term" value="P:defense response to Gram-positive bacterium"/>
    <property type="evidence" value="ECO:0000250"/>
    <property type="project" value="UniProtKB"/>
</dbReference>
<dbReference type="GO" id="GO:0002227">
    <property type="term" value="P:innate immune response in mucosa"/>
    <property type="evidence" value="ECO:0007669"/>
    <property type="project" value="TreeGrafter"/>
</dbReference>
<dbReference type="GO" id="GO:0060474">
    <property type="term" value="P:positive regulation of flagellated sperm motility involved in capacitation"/>
    <property type="evidence" value="ECO:0000250"/>
    <property type="project" value="UniProtKB"/>
</dbReference>
<dbReference type="FunFam" id="3.10.360.10:FF:000001">
    <property type="entry name" value="Beta-defensin 1"/>
    <property type="match status" value="1"/>
</dbReference>
<dbReference type="Gene3D" id="3.10.360.10">
    <property type="entry name" value="Antimicrobial Peptide, Beta-defensin 2, Chain A"/>
    <property type="match status" value="1"/>
</dbReference>
<dbReference type="InterPro" id="IPR001855">
    <property type="entry name" value="Defensin_beta-like"/>
</dbReference>
<dbReference type="PANTHER" id="PTHR21388:SF9">
    <property type="entry name" value="BETA-DEFENSIN 1"/>
    <property type="match status" value="1"/>
</dbReference>
<dbReference type="PANTHER" id="PTHR21388">
    <property type="entry name" value="BETA-DEFENSIN-RELATED"/>
    <property type="match status" value="1"/>
</dbReference>
<dbReference type="Pfam" id="PF00711">
    <property type="entry name" value="Defensin_beta"/>
    <property type="match status" value="1"/>
</dbReference>
<dbReference type="SUPFAM" id="SSF57392">
    <property type="entry name" value="Defensin-like"/>
    <property type="match status" value="1"/>
</dbReference>
<keyword id="KW-0044">Antibiotic</keyword>
<keyword id="KW-0929">Antimicrobial</keyword>
<keyword id="KW-0211">Defensin</keyword>
<keyword id="KW-1015">Disulfide bond</keyword>
<keyword id="KW-0472">Membrane</keyword>
<keyword id="KW-0964">Secreted</keyword>
<keyword id="KW-0732">Signal</keyword>
<organism>
    <name type="scientific">Presbytis melalophos</name>
    <name type="common">Mitred leaf monkey</name>
    <name type="synonym">Sumatran surili</name>
    <dbReference type="NCBI Taxonomy" id="78451"/>
    <lineage>
        <taxon>Eukaryota</taxon>
        <taxon>Metazoa</taxon>
        <taxon>Chordata</taxon>
        <taxon>Craniata</taxon>
        <taxon>Vertebrata</taxon>
        <taxon>Euteleostomi</taxon>
        <taxon>Mammalia</taxon>
        <taxon>Eutheria</taxon>
        <taxon>Euarchontoglires</taxon>
        <taxon>Primates</taxon>
        <taxon>Haplorrhini</taxon>
        <taxon>Catarrhini</taxon>
        <taxon>Cercopithecidae</taxon>
        <taxon>Colobinae</taxon>
        <taxon>Presbytis</taxon>
    </lineage>
</organism>
<feature type="signal peptide" evidence="3">
    <location>
        <begin position="1"/>
        <end position="21"/>
    </location>
</feature>
<feature type="propeptide" id="PRO_0000006919" evidence="1">
    <location>
        <begin position="22"/>
        <end position="32"/>
    </location>
</feature>
<feature type="peptide" id="PRO_0000006920" description="Beta-defensin 1">
    <location>
        <begin position="33"/>
        <end position="68"/>
    </location>
</feature>
<feature type="disulfide bond" evidence="1">
    <location>
        <begin position="37"/>
        <end position="66"/>
    </location>
</feature>
<feature type="disulfide bond" evidence="1">
    <location>
        <begin position="44"/>
        <end position="59"/>
    </location>
</feature>
<feature type="disulfide bond" evidence="1">
    <location>
        <begin position="49"/>
        <end position="67"/>
    </location>
</feature>
<comment type="function">
    <text evidence="2">Has bactericidal activity. May act as a ligand for C-C chemokine receptor CCR6. Positively regulates the sperm motility and bactericidal activity in a CCR6-dependent manner. Binds to CCR6 and triggers Ca2+ mobilization in the sperm which is important for its motility.</text>
</comment>
<comment type="subunit">
    <text evidence="2">Monomer. Homodimer.</text>
</comment>
<comment type="subcellular location">
    <subcellularLocation>
        <location evidence="2">Secreted</location>
    </subcellularLocation>
    <subcellularLocation>
        <location evidence="2">Membrane</location>
    </subcellularLocation>
    <text evidence="2">Associates with tumor cell membrane-derived microvesicles.</text>
</comment>
<comment type="similarity">
    <text evidence="4">Belongs to the beta-defensin family.</text>
</comment>
<proteinExistence type="inferred from homology"/>
<evidence type="ECO:0000250" key="1"/>
<evidence type="ECO:0000250" key="2">
    <source>
        <dbReference type="UniProtKB" id="P60022"/>
    </source>
</evidence>
<evidence type="ECO:0000255" key="3"/>
<evidence type="ECO:0000305" key="4"/>
<sequence length="68" mass="7562">MRTSYLLLFTLCLLMSEMASGDNFLTGLGHRSDHYNCVRSGGQCLYSACPIYTKIQGTCYHGKAKCCK</sequence>
<name>DEFB1_PREME</name>
<protein>
    <recommendedName>
        <fullName>Beta-defensin 1</fullName>
        <shortName>BD-1</shortName>
    </recommendedName>
    <alternativeName>
        <fullName>Defensin, beta 1</fullName>
    </alternativeName>
</protein>